<feature type="chain" id="PRO_1000061722" description="PKHD-type hydroxylase Mfla_2317">
    <location>
        <begin position="1"/>
        <end position="227"/>
    </location>
</feature>
<feature type="domain" description="Fe2OG dioxygenase" evidence="1">
    <location>
        <begin position="78"/>
        <end position="178"/>
    </location>
</feature>
<feature type="binding site" evidence="1">
    <location>
        <position position="96"/>
    </location>
    <ligand>
        <name>Fe cation</name>
        <dbReference type="ChEBI" id="CHEBI:24875"/>
    </ligand>
</feature>
<feature type="binding site" evidence="1">
    <location>
        <position position="98"/>
    </location>
    <ligand>
        <name>Fe cation</name>
        <dbReference type="ChEBI" id="CHEBI:24875"/>
    </ligand>
</feature>
<feature type="binding site" evidence="1">
    <location>
        <position position="159"/>
    </location>
    <ligand>
        <name>Fe cation</name>
        <dbReference type="ChEBI" id="CHEBI:24875"/>
    </ligand>
</feature>
<feature type="binding site" evidence="1">
    <location>
        <position position="169"/>
    </location>
    <ligand>
        <name>2-oxoglutarate</name>
        <dbReference type="ChEBI" id="CHEBI:16810"/>
    </ligand>
</feature>
<sequence>MLIEIPEVLTKEQVAQCRQLMDAAEWVDGNVTSGSQSALAKNNMQLPEGSPVARQVGDLIQDALGMSPLFISAALPLKVFPPLFNRYEGGQAFGTHVDNAIRQLRGTNFRIRSDLSATLFFSEPEDYDGGVLTIEDTFGIQEVKLPAGHMVLYPSSSLHHVTPVTRGVRVSSFFWMQSMIRDDAQRTLLFQLDGSIQAIGAERGAGDPEVIRLTGVYHNLLRMWADS</sequence>
<gene>
    <name type="ordered locus">Mfla_2317</name>
</gene>
<comment type="cofactor">
    <cofactor evidence="1">
        <name>Fe(2+)</name>
        <dbReference type="ChEBI" id="CHEBI:29033"/>
    </cofactor>
    <text evidence="1">Binds 1 Fe(2+) ion per subunit.</text>
</comment>
<comment type="cofactor">
    <cofactor evidence="1">
        <name>L-ascorbate</name>
        <dbReference type="ChEBI" id="CHEBI:38290"/>
    </cofactor>
</comment>
<organism>
    <name type="scientific">Methylobacillus flagellatus (strain ATCC 51484 / DSM 6875 / VKM B-1610 / KT)</name>
    <dbReference type="NCBI Taxonomy" id="265072"/>
    <lineage>
        <taxon>Bacteria</taxon>
        <taxon>Pseudomonadati</taxon>
        <taxon>Pseudomonadota</taxon>
        <taxon>Betaproteobacteria</taxon>
        <taxon>Nitrosomonadales</taxon>
        <taxon>Methylophilaceae</taxon>
        <taxon>Methylobacillus</taxon>
    </lineage>
</organism>
<name>Y2317_METFK</name>
<protein>
    <recommendedName>
        <fullName evidence="1">PKHD-type hydroxylase Mfla_2317</fullName>
        <ecNumber evidence="1">1.14.11.-</ecNumber>
    </recommendedName>
</protein>
<keyword id="KW-0223">Dioxygenase</keyword>
<keyword id="KW-0408">Iron</keyword>
<keyword id="KW-0479">Metal-binding</keyword>
<keyword id="KW-0560">Oxidoreductase</keyword>
<keyword id="KW-1185">Reference proteome</keyword>
<keyword id="KW-0847">Vitamin C</keyword>
<reference key="1">
    <citation type="submission" date="2006-03" db="EMBL/GenBank/DDBJ databases">
        <title>Complete sequence of Methylobacillus flagellatus KT.</title>
        <authorList>
            <consortium name="US DOE Joint Genome Institute"/>
            <person name="Copeland A."/>
            <person name="Lucas S."/>
            <person name="Lapidus A."/>
            <person name="Barry K."/>
            <person name="Detter J.C."/>
            <person name="Glavina del Rio T."/>
            <person name="Hammon N."/>
            <person name="Israni S."/>
            <person name="Dalin E."/>
            <person name="Tice H."/>
            <person name="Pitluck S."/>
            <person name="Brettin T."/>
            <person name="Bruce D."/>
            <person name="Han C."/>
            <person name="Tapia R."/>
            <person name="Saunders E."/>
            <person name="Gilna P."/>
            <person name="Schmutz J."/>
            <person name="Larimer F."/>
            <person name="Land M."/>
            <person name="Kyrpides N."/>
            <person name="Anderson I."/>
            <person name="Richardson P."/>
        </authorList>
    </citation>
    <scope>NUCLEOTIDE SEQUENCE [LARGE SCALE GENOMIC DNA]</scope>
    <source>
        <strain>ATCC 51484 / DSM 6875 / VKM B-1610 / KT</strain>
    </source>
</reference>
<evidence type="ECO:0000255" key="1">
    <source>
        <dbReference type="HAMAP-Rule" id="MF_00657"/>
    </source>
</evidence>
<accession>Q1GYV3</accession>
<dbReference type="EC" id="1.14.11.-" evidence="1"/>
<dbReference type="EMBL" id="CP000284">
    <property type="protein sequence ID" value="ABE50584.1"/>
    <property type="molecule type" value="Genomic_DNA"/>
</dbReference>
<dbReference type="RefSeq" id="WP_011480538.1">
    <property type="nucleotide sequence ID" value="NC_007947.1"/>
</dbReference>
<dbReference type="SMR" id="Q1GYV3"/>
<dbReference type="STRING" id="265072.Mfla_2317"/>
<dbReference type="KEGG" id="mfa:Mfla_2317"/>
<dbReference type="eggNOG" id="COG3128">
    <property type="taxonomic scope" value="Bacteria"/>
</dbReference>
<dbReference type="HOGENOM" id="CLU_106663_0_0_4"/>
<dbReference type="OrthoDB" id="9812472at2"/>
<dbReference type="Proteomes" id="UP000002440">
    <property type="component" value="Chromosome"/>
</dbReference>
<dbReference type="GO" id="GO:0016706">
    <property type="term" value="F:2-oxoglutarate-dependent dioxygenase activity"/>
    <property type="evidence" value="ECO:0007669"/>
    <property type="project" value="UniProtKB-UniRule"/>
</dbReference>
<dbReference type="GO" id="GO:0005506">
    <property type="term" value="F:iron ion binding"/>
    <property type="evidence" value="ECO:0007669"/>
    <property type="project" value="UniProtKB-UniRule"/>
</dbReference>
<dbReference type="GO" id="GO:0031418">
    <property type="term" value="F:L-ascorbic acid binding"/>
    <property type="evidence" value="ECO:0007669"/>
    <property type="project" value="UniProtKB-KW"/>
</dbReference>
<dbReference type="GO" id="GO:0006974">
    <property type="term" value="P:DNA damage response"/>
    <property type="evidence" value="ECO:0007669"/>
    <property type="project" value="TreeGrafter"/>
</dbReference>
<dbReference type="GO" id="GO:0006879">
    <property type="term" value="P:intracellular iron ion homeostasis"/>
    <property type="evidence" value="ECO:0007669"/>
    <property type="project" value="TreeGrafter"/>
</dbReference>
<dbReference type="Gene3D" id="2.60.120.620">
    <property type="entry name" value="q2cbj1_9rhob like domain"/>
    <property type="match status" value="1"/>
</dbReference>
<dbReference type="Gene3D" id="4.10.860.20">
    <property type="entry name" value="Rabenosyn, Rab binding domain"/>
    <property type="match status" value="1"/>
</dbReference>
<dbReference type="HAMAP" id="MF_00657">
    <property type="entry name" value="Hydroxyl_YbiX"/>
    <property type="match status" value="1"/>
</dbReference>
<dbReference type="InterPro" id="IPR005123">
    <property type="entry name" value="Oxoglu/Fe-dep_dioxygenase_dom"/>
</dbReference>
<dbReference type="InterPro" id="IPR041097">
    <property type="entry name" value="PKHD_C"/>
</dbReference>
<dbReference type="InterPro" id="IPR023550">
    <property type="entry name" value="PKHD_hydroxylase"/>
</dbReference>
<dbReference type="InterPro" id="IPR006620">
    <property type="entry name" value="Pro_4_hyd_alph"/>
</dbReference>
<dbReference type="InterPro" id="IPR044862">
    <property type="entry name" value="Pro_4_hyd_alph_FE2OG_OXY"/>
</dbReference>
<dbReference type="NCBIfam" id="NF003973">
    <property type="entry name" value="PRK05467.1-2"/>
    <property type="match status" value="1"/>
</dbReference>
<dbReference type="NCBIfam" id="NF003974">
    <property type="entry name" value="PRK05467.1-3"/>
    <property type="match status" value="1"/>
</dbReference>
<dbReference type="NCBIfam" id="NF003975">
    <property type="entry name" value="PRK05467.1-4"/>
    <property type="match status" value="1"/>
</dbReference>
<dbReference type="PANTHER" id="PTHR41536">
    <property type="entry name" value="PKHD-TYPE HYDROXYLASE YBIX"/>
    <property type="match status" value="1"/>
</dbReference>
<dbReference type="PANTHER" id="PTHR41536:SF1">
    <property type="entry name" value="PKHD-TYPE HYDROXYLASE YBIX"/>
    <property type="match status" value="1"/>
</dbReference>
<dbReference type="Pfam" id="PF13640">
    <property type="entry name" value="2OG-FeII_Oxy_3"/>
    <property type="match status" value="1"/>
</dbReference>
<dbReference type="Pfam" id="PF18331">
    <property type="entry name" value="PKHD_C"/>
    <property type="match status" value="1"/>
</dbReference>
<dbReference type="SMART" id="SM00702">
    <property type="entry name" value="P4Hc"/>
    <property type="match status" value="1"/>
</dbReference>
<dbReference type="PROSITE" id="PS51471">
    <property type="entry name" value="FE2OG_OXY"/>
    <property type="match status" value="1"/>
</dbReference>
<proteinExistence type="inferred from homology"/>